<evidence type="ECO:0000255" key="1">
    <source>
        <dbReference type="HAMAP-Rule" id="MF_00385"/>
    </source>
</evidence>
<evidence type="ECO:0000256" key="2">
    <source>
        <dbReference type="SAM" id="MobiDB-lite"/>
    </source>
</evidence>
<evidence type="ECO:0000305" key="3"/>
<feature type="chain" id="PRO_0000167162" description="Small ribosomal subunit protein bS16">
    <location>
        <begin position="1"/>
        <end position="134"/>
    </location>
</feature>
<feature type="region of interest" description="Disordered" evidence="2">
    <location>
        <begin position="79"/>
        <end position="134"/>
    </location>
</feature>
<feature type="compositionally biased region" description="Low complexity" evidence="2">
    <location>
        <begin position="115"/>
        <end position="134"/>
    </location>
</feature>
<protein>
    <recommendedName>
        <fullName evidence="1">Small ribosomal subunit protein bS16</fullName>
    </recommendedName>
    <alternativeName>
        <fullName evidence="3">30S ribosomal protein S16</fullName>
    </alternativeName>
</protein>
<name>RS16_BRUSU</name>
<accession>P66434</accession>
<accession>G0K7P0</accession>
<accession>Q8YJ59</accession>
<keyword id="KW-0687">Ribonucleoprotein</keyword>
<keyword id="KW-0689">Ribosomal protein</keyword>
<sequence length="134" mass="14530">MALKIRLARAGSKKRPYYHVVVADVRAPRDGRFIETVGSWNPVLPKDAERVKLDAERIQHWIAQGAQPTDRVLRFLDQAGIAKRPSRNNPTKGEPGKKAQERLALAKQAEEEAAAKAAEAAAAAAAPAEEAASE</sequence>
<proteinExistence type="inferred from homology"/>
<comment type="similarity">
    <text evidence="1">Belongs to the bacterial ribosomal protein bS16 family.</text>
</comment>
<reference key="1">
    <citation type="journal article" date="2002" name="Proc. Natl. Acad. Sci. U.S.A.">
        <title>The Brucella suis genome reveals fundamental similarities between animal and plant pathogens and symbionts.</title>
        <authorList>
            <person name="Paulsen I.T."/>
            <person name="Seshadri R."/>
            <person name="Nelson K.E."/>
            <person name="Eisen J.A."/>
            <person name="Heidelberg J.F."/>
            <person name="Read T.D."/>
            <person name="Dodson R.J."/>
            <person name="Umayam L.A."/>
            <person name="Brinkac L.M."/>
            <person name="Beanan M.J."/>
            <person name="Daugherty S.C."/>
            <person name="DeBoy R.T."/>
            <person name="Durkin A.S."/>
            <person name="Kolonay J.F."/>
            <person name="Madupu R."/>
            <person name="Nelson W.C."/>
            <person name="Ayodeji B."/>
            <person name="Kraul M."/>
            <person name="Shetty J."/>
            <person name="Malek J.A."/>
            <person name="Van Aken S.E."/>
            <person name="Riedmuller S."/>
            <person name="Tettelin H."/>
            <person name="Gill S.R."/>
            <person name="White O."/>
            <person name="Salzberg S.L."/>
            <person name="Hoover D.L."/>
            <person name="Lindler L.E."/>
            <person name="Halling S.M."/>
            <person name="Boyle S.M."/>
            <person name="Fraser C.M."/>
        </authorList>
    </citation>
    <scope>NUCLEOTIDE SEQUENCE [LARGE SCALE GENOMIC DNA]</scope>
    <source>
        <strain>1330</strain>
    </source>
</reference>
<reference key="2">
    <citation type="journal article" date="2011" name="J. Bacteriol.">
        <title>Revised genome sequence of Brucella suis 1330.</title>
        <authorList>
            <person name="Tae H."/>
            <person name="Shallom S."/>
            <person name="Settlage R."/>
            <person name="Preston D."/>
            <person name="Adams L.G."/>
            <person name="Garner H.R."/>
        </authorList>
    </citation>
    <scope>NUCLEOTIDE SEQUENCE [LARGE SCALE GENOMIC DNA]</scope>
    <source>
        <strain>1330</strain>
    </source>
</reference>
<organism>
    <name type="scientific">Brucella suis biovar 1 (strain 1330)</name>
    <dbReference type="NCBI Taxonomy" id="204722"/>
    <lineage>
        <taxon>Bacteria</taxon>
        <taxon>Pseudomonadati</taxon>
        <taxon>Pseudomonadota</taxon>
        <taxon>Alphaproteobacteria</taxon>
        <taxon>Hyphomicrobiales</taxon>
        <taxon>Brucellaceae</taxon>
        <taxon>Brucella/Ochrobactrum group</taxon>
        <taxon>Brucella</taxon>
    </lineage>
</organism>
<dbReference type="EMBL" id="AE014291">
    <property type="protein sequence ID" value="AAN30719.1"/>
    <property type="molecule type" value="Genomic_DNA"/>
</dbReference>
<dbReference type="EMBL" id="CP002997">
    <property type="protein sequence ID" value="AEM19136.1"/>
    <property type="molecule type" value="Genomic_DNA"/>
</dbReference>
<dbReference type="RefSeq" id="WP_002967942.1">
    <property type="nucleotide sequence ID" value="NZ_KN046804.1"/>
</dbReference>
<dbReference type="SMR" id="P66434"/>
<dbReference type="GeneID" id="97533054"/>
<dbReference type="KEGG" id="bms:BR1824"/>
<dbReference type="KEGG" id="bsi:BS1330_I1818"/>
<dbReference type="PATRIC" id="fig|204722.21.peg.1153"/>
<dbReference type="HOGENOM" id="CLU_100590_3_1_5"/>
<dbReference type="PhylomeDB" id="P66434"/>
<dbReference type="Proteomes" id="UP000007104">
    <property type="component" value="Chromosome I"/>
</dbReference>
<dbReference type="GO" id="GO:0005737">
    <property type="term" value="C:cytoplasm"/>
    <property type="evidence" value="ECO:0007669"/>
    <property type="project" value="UniProtKB-ARBA"/>
</dbReference>
<dbReference type="GO" id="GO:0015935">
    <property type="term" value="C:small ribosomal subunit"/>
    <property type="evidence" value="ECO:0007669"/>
    <property type="project" value="TreeGrafter"/>
</dbReference>
<dbReference type="GO" id="GO:0003735">
    <property type="term" value="F:structural constituent of ribosome"/>
    <property type="evidence" value="ECO:0007669"/>
    <property type="project" value="InterPro"/>
</dbReference>
<dbReference type="GO" id="GO:0006412">
    <property type="term" value="P:translation"/>
    <property type="evidence" value="ECO:0007669"/>
    <property type="project" value="UniProtKB-UniRule"/>
</dbReference>
<dbReference type="Gene3D" id="3.30.1320.10">
    <property type="match status" value="1"/>
</dbReference>
<dbReference type="HAMAP" id="MF_00385">
    <property type="entry name" value="Ribosomal_bS16"/>
    <property type="match status" value="1"/>
</dbReference>
<dbReference type="InterPro" id="IPR000307">
    <property type="entry name" value="Ribosomal_bS16"/>
</dbReference>
<dbReference type="InterPro" id="IPR023803">
    <property type="entry name" value="Ribosomal_bS16_dom_sf"/>
</dbReference>
<dbReference type="NCBIfam" id="TIGR00002">
    <property type="entry name" value="S16"/>
    <property type="match status" value="1"/>
</dbReference>
<dbReference type="PANTHER" id="PTHR12919">
    <property type="entry name" value="30S RIBOSOMAL PROTEIN S16"/>
    <property type="match status" value="1"/>
</dbReference>
<dbReference type="PANTHER" id="PTHR12919:SF20">
    <property type="entry name" value="SMALL RIBOSOMAL SUBUNIT PROTEIN BS16M"/>
    <property type="match status" value="1"/>
</dbReference>
<dbReference type="Pfam" id="PF00886">
    <property type="entry name" value="Ribosomal_S16"/>
    <property type="match status" value="1"/>
</dbReference>
<dbReference type="SUPFAM" id="SSF54565">
    <property type="entry name" value="Ribosomal protein S16"/>
    <property type="match status" value="1"/>
</dbReference>
<gene>
    <name evidence="1" type="primary">rpsP</name>
    <name type="ordered locus">BR1824</name>
    <name type="ordered locus">BS1330_I1818</name>
</gene>